<evidence type="ECO:0000255" key="1">
    <source>
        <dbReference type="HAMAP-Rule" id="MF_00480"/>
    </source>
</evidence>
<evidence type="ECO:0000305" key="2"/>
<proteinExistence type="inferred from homology"/>
<reference key="1">
    <citation type="journal article" date="2007" name="Proc. Natl. Acad. Sci. U.S.A.">
        <title>Genome sequencing reveals complex secondary metabolome in the marine actinomycete Salinispora tropica.</title>
        <authorList>
            <person name="Udwary D.W."/>
            <person name="Zeigler L."/>
            <person name="Asolkar R.N."/>
            <person name="Singan V."/>
            <person name="Lapidus A."/>
            <person name="Fenical W."/>
            <person name="Jensen P.R."/>
            <person name="Moore B.S."/>
        </authorList>
    </citation>
    <scope>NUCLEOTIDE SEQUENCE [LARGE SCALE GENOMIC DNA]</scope>
    <source>
        <strain>ATCC BAA-916 / DSM 44818 / JCM 13857 / NBRC 105044 / CNB-440</strain>
    </source>
</reference>
<protein>
    <recommendedName>
        <fullName evidence="1">Small ribosomal subunit protein uS7</fullName>
    </recommendedName>
    <alternativeName>
        <fullName evidence="2">30S ribosomal protein S7</fullName>
    </alternativeName>
</protein>
<accession>A4XBQ0</accession>
<gene>
    <name evidence="1" type="primary">rpsG</name>
    <name type="ordered locus">Strop_3927</name>
</gene>
<comment type="function">
    <text evidence="1">One of the primary rRNA binding proteins, it binds directly to 16S rRNA where it nucleates assembly of the head domain of the 30S subunit. Is located at the subunit interface close to the decoding center, probably blocks exit of the E-site tRNA.</text>
</comment>
<comment type="subunit">
    <text evidence="1">Part of the 30S ribosomal subunit. Contacts proteins S9 and S11.</text>
</comment>
<comment type="similarity">
    <text evidence="1">Belongs to the universal ribosomal protein uS7 family.</text>
</comment>
<feature type="chain" id="PRO_1000081301" description="Small ribosomal subunit protein uS7">
    <location>
        <begin position="1"/>
        <end position="156"/>
    </location>
</feature>
<sequence>MPRKGPAPRRPLVADPVYNSPLVTQLVNKILLRGKRQLAETLVYAALEGCREKSGTDPVVTLKRAMDNVKPTLEVRSRRVGGATYQVPVEVRPARATTLGLRWLVTYARARREKTMVERLMNELLDASNGLGAAVKRREDTHKMAESNKAFAHYRW</sequence>
<organism>
    <name type="scientific">Salinispora tropica (strain ATCC BAA-916 / DSM 44818 / JCM 13857 / NBRC 105044 / CNB-440)</name>
    <dbReference type="NCBI Taxonomy" id="369723"/>
    <lineage>
        <taxon>Bacteria</taxon>
        <taxon>Bacillati</taxon>
        <taxon>Actinomycetota</taxon>
        <taxon>Actinomycetes</taxon>
        <taxon>Micromonosporales</taxon>
        <taxon>Micromonosporaceae</taxon>
        <taxon>Salinispora</taxon>
    </lineage>
</organism>
<keyword id="KW-1185">Reference proteome</keyword>
<keyword id="KW-0687">Ribonucleoprotein</keyword>
<keyword id="KW-0689">Ribosomal protein</keyword>
<keyword id="KW-0694">RNA-binding</keyword>
<keyword id="KW-0699">rRNA-binding</keyword>
<keyword id="KW-0820">tRNA-binding</keyword>
<name>RS7_SALTO</name>
<dbReference type="EMBL" id="CP000667">
    <property type="protein sequence ID" value="ABP56357.1"/>
    <property type="molecule type" value="Genomic_DNA"/>
</dbReference>
<dbReference type="RefSeq" id="WP_012015128.1">
    <property type="nucleotide sequence ID" value="NC_009380.1"/>
</dbReference>
<dbReference type="SMR" id="A4XBQ0"/>
<dbReference type="STRING" id="369723.Strop_3927"/>
<dbReference type="KEGG" id="stp:Strop_3927"/>
<dbReference type="PATRIC" id="fig|369723.5.peg.4053"/>
<dbReference type="eggNOG" id="COG0049">
    <property type="taxonomic scope" value="Bacteria"/>
</dbReference>
<dbReference type="HOGENOM" id="CLU_072226_1_1_11"/>
<dbReference type="Proteomes" id="UP000000235">
    <property type="component" value="Chromosome"/>
</dbReference>
<dbReference type="GO" id="GO:0015935">
    <property type="term" value="C:small ribosomal subunit"/>
    <property type="evidence" value="ECO:0007669"/>
    <property type="project" value="InterPro"/>
</dbReference>
<dbReference type="GO" id="GO:0019843">
    <property type="term" value="F:rRNA binding"/>
    <property type="evidence" value="ECO:0007669"/>
    <property type="project" value="UniProtKB-UniRule"/>
</dbReference>
<dbReference type="GO" id="GO:0003735">
    <property type="term" value="F:structural constituent of ribosome"/>
    <property type="evidence" value="ECO:0007669"/>
    <property type="project" value="InterPro"/>
</dbReference>
<dbReference type="GO" id="GO:0000049">
    <property type="term" value="F:tRNA binding"/>
    <property type="evidence" value="ECO:0007669"/>
    <property type="project" value="UniProtKB-UniRule"/>
</dbReference>
<dbReference type="GO" id="GO:0006412">
    <property type="term" value="P:translation"/>
    <property type="evidence" value="ECO:0007669"/>
    <property type="project" value="UniProtKB-UniRule"/>
</dbReference>
<dbReference type="CDD" id="cd14869">
    <property type="entry name" value="uS7_Bacteria"/>
    <property type="match status" value="1"/>
</dbReference>
<dbReference type="FunFam" id="1.10.455.10:FF:000001">
    <property type="entry name" value="30S ribosomal protein S7"/>
    <property type="match status" value="1"/>
</dbReference>
<dbReference type="Gene3D" id="1.10.455.10">
    <property type="entry name" value="Ribosomal protein S7 domain"/>
    <property type="match status" value="1"/>
</dbReference>
<dbReference type="HAMAP" id="MF_00480_B">
    <property type="entry name" value="Ribosomal_uS7_B"/>
    <property type="match status" value="1"/>
</dbReference>
<dbReference type="InterPro" id="IPR000235">
    <property type="entry name" value="Ribosomal_uS7"/>
</dbReference>
<dbReference type="InterPro" id="IPR005717">
    <property type="entry name" value="Ribosomal_uS7_bac/org-type"/>
</dbReference>
<dbReference type="InterPro" id="IPR020606">
    <property type="entry name" value="Ribosomal_uS7_CS"/>
</dbReference>
<dbReference type="InterPro" id="IPR023798">
    <property type="entry name" value="Ribosomal_uS7_dom"/>
</dbReference>
<dbReference type="InterPro" id="IPR036823">
    <property type="entry name" value="Ribosomal_uS7_dom_sf"/>
</dbReference>
<dbReference type="NCBIfam" id="TIGR01029">
    <property type="entry name" value="rpsG_bact"/>
    <property type="match status" value="1"/>
</dbReference>
<dbReference type="PANTHER" id="PTHR11205">
    <property type="entry name" value="RIBOSOMAL PROTEIN S7"/>
    <property type="match status" value="1"/>
</dbReference>
<dbReference type="Pfam" id="PF00177">
    <property type="entry name" value="Ribosomal_S7"/>
    <property type="match status" value="1"/>
</dbReference>
<dbReference type="PIRSF" id="PIRSF002122">
    <property type="entry name" value="RPS7p_RPS7a_RPS5e_RPS7o"/>
    <property type="match status" value="1"/>
</dbReference>
<dbReference type="SUPFAM" id="SSF47973">
    <property type="entry name" value="Ribosomal protein S7"/>
    <property type="match status" value="1"/>
</dbReference>
<dbReference type="PROSITE" id="PS00052">
    <property type="entry name" value="RIBOSOMAL_S7"/>
    <property type="match status" value="1"/>
</dbReference>